<keyword id="KW-0687">Ribonucleoprotein</keyword>
<keyword id="KW-0689">Ribosomal protein</keyword>
<keyword id="KW-0694">RNA-binding</keyword>
<keyword id="KW-0699">rRNA-binding</keyword>
<organism>
    <name type="scientific">Prochlorococcus marinus (strain MIT 9312)</name>
    <dbReference type="NCBI Taxonomy" id="74546"/>
    <lineage>
        <taxon>Bacteria</taxon>
        <taxon>Bacillati</taxon>
        <taxon>Cyanobacteriota</taxon>
        <taxon>Cyanophyceae</taxon>
        <taxon>Synechococcales</taxon>
        <taxon>Prochlorococcaceae</taxon>
        <taxon>Prochlorococcus</taxon>
    </lineage>
</organism>
<reference key="1">
    <citation type="journal article" date="2006" name="Science">
        <title>Genomic islands and the ecology and evolution of Prochlorococcus.</title>
        <authorList>
            <person name="Coleman M.L."/>
            <person name="Sullivan M.B."/>
            <person name="Martiny A.C."/>
            <person name="Steglich C."/>
            <person name="Barry K."/>
            <person name="Delong E.F."/>
            <person name="Chisholm S.W."/>
        </authorList>
    </citation>
    <scope>NUCLEOTIDE SEQUENCE [LARGE SCALE GENOMIC DNA]</scope>
    <source>
        <strain>MIT 9312</strain>
    </source>
</reference>
<sequence length="217" mass="23270">MSIGILGKKLGMSQLFDDKGNAVPVTLIEAGPCRVTQLKTTTLDGYSAVQIGYGLSKDKHINKPEKGHLLKSGEELLKHLKEYRVEETTSYEIGNQITVKNFEVGQKVDISGKSMGRGFAGYQKRHGFSRGPMSHGSKNHRAPGSTGAGTTPGRIYPGKRMAGRYGGKQITTKGLLVLKIDDQKNLLVIKGSVPGKPGSIVNIKPNNVVGKKGGQKS</sequence>
<protein>
    <recommendedName>
        <fullName evidence="1">Large ribosomal subunit protein uL3</fullName>
    </recommendedName>
    <alternativeName>
        <fullName evidence="3">50S ribosomal protein L3</fullName>
    </alternativeName>
</protein>
<accession>Q318I4</accession>
<proteinExistence type="inferred from homology"/>
<gene>
    <name evidence="1" type="primary">rplC</name>
    <name evidence="1" type="synonym">rpl3</name>
    <name type="ordered locus">PMT9312_1650</name>
</gene>
<feature type="chain" id="PRO_0000241385" description="Large ribosomal subunit protein uL3">
    <location>
        <begin position="1"/>
        <end position="217"/>
    </location>
</feature>
<feature type="region of interest" description="Disordered" evidence="2">
    <location>
        <begin position="127"/>
        <end position="162"/>
    </location>
</feature>
<feature type="compositionally biased region" description="Low complexity" evidence="2">
    <location>
        <begin position="142"/>
        <end position="153"/>
    </location>
</feature>
<name>RL3_PROM9</name>
<dbReference type="EMBL" id="CP000111">
    <property type="protein sequence ID" value="ABB50711.1"/>
    <property type="molecule type" value="Genomic_DNA"/>
</dbReference>
<dbReference type="RefSeq" id="WP_011377192.1">
    <property type="nucleotide sequence ID" value="NC_007577.1"/>
</dbReference>
<dbReference type="SMR" id="Q318I4"/>
<dbReference type="STRING" id="74546.PMT9312_1650"/>
<dbReference type="KEGG" id="pmi:PMT9312_1650"/>
<dbReference type="eggNOG" id="COG0087">
    <property type="taxonomic scope" value="Bacteria"/>
</dbReference>
<dbReference type="HOGENOM" id="CLU_044142_4_1_3"/>
<dbReference type="OrthoDB" id="9806135at2"/>
<dbReference type="Proteomes" id="UP000002715">
    <property type="component" value="Chromosome"/>
</dbReference>
<dbReference type="GO" id="GO:0022625">
    <property type="term" value="C:cytosolic large ribosomal subunit"/>
    <property type="evidence" value="ECO:0007669"/>
    <property type="project" value="TreeGrafter"/>
</dbReference>
<dbReference type="GO" id="GO:0019843">
    <property type="term" value="F:rRNA binding"/>
    <property type="evidence" value="ECO:0007669"/>
    <property type="project" value="UniProtKB-UniRule"/>
</dbReference>
<dbReference type="GO" id="GO:0003735">
    <property type="term" value="F:structural constituent of ribosome"/>
    <property type="evidence" value="ECO:0007669"/>
    <property type="project" value="InterPro"/>
</dbReference>
<dbReference type="GO" id="GO:0006412">
    <property type="term" value="P:translation"/>
    <property type="evidence" value="ECO:0007669"/>
    <property type="project" value="UniProtKB-UniRule"/>
</dbReference>
<dbReference type="FunFam" id="3.30.160.810:FF:000001">
    <property type="entry name" value="50S ribosomal protein L3"/>
    <property type="match status" value="1"/>
</dbReference>
<dbReference type="FunFam" id="2.40.30.10:FF:000065">
    <property type="entry name" value="50S ribosomal protein L3, chloroplastic"/>
    <property type="match status" value="1"/>
</dbReference>
<dbReference type="Gene3D" id="3.30.160.810">
    <property type="match status" value="1"/>
</dbReference>
<dbReference type="Gene3D" id="2.40.30.10">
    <property type="entry name" value="Translation factors"/>
    <property type="match status" value="1"/>
</dbReference>
<dbReference type="HAMAP" id="MF_01325_B">
    <property type="entry name" value="Ribosomal_uL3_B"/>
    <property type="match status" value="1"/>
</dbReference>
<dbReference type="InterPro" id="IPR000597">
    <property type="entry name" value="Ribosomal_uL3"/>
</dbReference>
<dbReference type="InterPro" id="IPR019927">
    <property type="entry name" value="Ribosomal_uL3_bac/org-type"/>
</dbReference>
<dbReference type="InterPro" id="IPR019926">
    <property type="entry name" value="Ribosomal_uL3_CS"/>
</dbReference>
<dbReference type="InterPro" id="IPR009000">
    <property type="entry name" value="Transl_B-barrel_sf"/>
</dbReference>
<dbReference type="NCBIfam" id="TIGR03625">
    <property type="entry name" value="L3_bact"/>
    <property type="match status" value="1"/>
</dbReference>
<dbReference type="PANTHER" id="PTHR11229">
    <property type="entry name" value="50S RIBOSOMAL PROTEIN L3"/>
    <property type="match status" value="1"/>
</dbReference>
<dbReference type="PANTHER" id="PTHR11229:SF16">
    <property type="entry name" value="LARGE RIBOSOMAL SUBUNIT PROTEIN UL3C"/>
    <property type="match status" value="1"/>
</dbReference>
<dbReference type="Pfam" id="PF00297">
    <property type="entry name" value="Ribosomal_L3"/>
    <property type="match status" value="1"/>
</dbReference>
<dbReference type="SUPFAM" id="SSF50447">
    <property type="entry name" value="Translation proteins"/>
    <property type="match status" value="1"/>
</dbReference>
<dbReference type="PROSITE" id="PS00474">
    <property type="entry name" value="RIBOSOMAL_L3"/>
    <property type="match status" value="1"/>
</dbReference>
<evidence type="ECO:0000255" key="1">
    <source>
        <dbReference type="HAMAP-Rule" id="MF_01325"/>
    </source>
</evidence>
<evidence type="ECO:0000256" key="2">
    <source>
        <dbReference type="SAM" id="MobiDB-lite"/>
    </source>
</evidence>
<evidence type="ECO:0000305" key="3"/>
<comment type="function">
    <text evidence="1">One of the primary rRNA binding proteins, it binds directly near the 3'-end of the 23S rRNA, where it nucleates assembly of the 50S subunit.</text>
</comment>
<comment type="subunit">
    <text evidence="1">Part of the 50S ribosomal subunit. Forms a cluster with proteins L14 and L19.</text>
</comment>
<comment type="similarity">
    <text evidence="1">Belongs to the universal ribosomal protein uL3 family.</text>
</comment>